<organism>
    <name type="scientific">Thermoanaerobacter sp</name>
    <dbReference type="NCBI Taxonomy" id="1755"/>
    <lineage>
        <taxon>Bacteria</taxon>
        <taxon>Bacillati</taxon>
        <taxon>Bacillota</taxon>
        <taxon>Clostridia</taxon>
        <taxon>Thermoanaerobacterales</taxon>
        <taxon>Thermoanaerobacteraceae</taxon>
        <taxon>Thermoanaerobacter</taxon>
    </lineage>
</organism>
<sequence length="25" mass="2683">DFPIANGERQSPVDIDTKAVVQDPA</sequence>
<name>BIOR_THESB</name>
<reference key="1">
    <citation type="journal article" date="2010" name="Enzyme Microb. Technol.">
        <title>Bioremediase a unique protein from a novel bacterium BKH1, ushering a new hope in concrete technology.</title>
        <authorList>
            <person name="Biswas S."/>
            <person name="Majumdar S."/>
            <person name="Chowdhury T."/>
            <person name="Chattopadhyay B."/>
            <person name="Mandal S."/>
            <person name="Halder U.C."/>
            <person name="Yamasaki S."/>
        </authorList>
    </citation>
    <scope>PROTEIN SEQUENCE</scope>
    <scope>FUNCTION</scope>
    <scope>BIOTECHNOLOGY</scope>
    <source>
        <strain evidence="4">BKH1</strain>
    </source>
</reference>
<reference key="2">
    <citation type="journal article" date="2015" name="J. Biol. Inorg. Chem.">
        <title>Participatory role of zinc in structural and functional characterization of bioremediase: a unique thermostable microbial silica leaching protein.</title>
        <authorList>
            <person name="Chowdhury T."/>
            <person name="Sarkar M."/>
            <person name="Chaudhuri B."/>
            <person name="Chattopadhyay B."/>
            <person name="Halder U.C."/>
        </authorList>
    </citation>
    <scope>FUNCTION</scope>
    <scope>COFACTOR</scope>
    <scope>IDENTIFICATION BY MASS SPECTROMETRY</scope>
    <scope>BIOTECHNOLOGY</scope>
    <source>
        <strain>BKH1</strain>
    </source>
</reference>
<protein>
    <recommendedName>
        <fullName evidence="5">Bioremediase</fullName>
    </recommendedName>
</protein>
<evidence type="ECO:0000255" key="1">
    <source>
        <dbReference type="PROSITE-ProRule" id="PRU01134"/>
    </source>
</evidence>
<evidence type="ECO:0000256" key="2">
    <source>
        <dbReference type="SAM" id="MobiDB-lite"/>
    </source>
</evidence>
<evidence type="ECO:0000269" key="3">
    <source>
    </source>
</evidence>
<evidence type="ECO:0000269" key="4">
    <source ref="1"/>
</evidence>
<evidence type="ECO:0000303" key="5">
    <source ref="1"/>
</evidence>
<evidence type="ECO:0000305" key="6"/>
<dbReference type="SMR" id="P86277"/>
<dbReference type="InterPro" id="IPR001148">
    <property type="entry name" value="CA_dom"/>
</dbReference>
<dbReference type="PROSITE" id="PS51144">
    <property type="entry name" value="ALPHA_CA_2"/>
    <property type="match status" value="1"/>
</dbReference>
<proteinExistence type="evidence at protein level"/>
<comment type="function">
    <text evidence="3 4">Releases silica from silica-rich substances.</text>
</comment>
<comment type="cofactor">
    <cofactor evidence="3">
        <name>Zn(2+)</name>
        <dbReference type="ChEBI" id="CHEBI:29105"/>
    </cofactor>
</comment>
<comment type="biotechnology">
    <text evidence="3 4">Has a potential use in the concrete technology for the development of an inherent and more durable concrete material.</text>
</comment>
<comment type="similarity">
    <text evidence="6">Belongs to the alpha-carbonic anhydrase family.</text>
</comment>
<accession>P86277</accession>
<keyword id="KW-0903">Direct protein sequencing</keyword>
<feature type="chain" id="PRO_0000390702" description="Bioremediase">
    <location>
        <begin position="1"/>
        <end position="25" status="greater than"/>
    </location>
</feature>
<feature type="domain" description="Alpha-carbonic anhydrase" evidence="1">
    <location>
        <begin position="1"/>
        <end position="25" status="greater than"/>
    </location>
</feature>
<feature type="region of interest" description="Disordered" evidence="2">
    <location>
        <begin position="1"/>
        <end position="25"/>
    </location>
</feature>
<feature type="non-terminal residue" evidence="5">
    <location>
        <position position="25"/>
    </location>
</feature>